<sequence>MSRRGTAEEKTAKSDPIYRNRLVNMLVNRILKHGKKSLAYQIIYRAVKKIQQKTETNPLSVLRQAIRGVTPDIAVKARRVGGSTHQVPIEIGSTQGKALAIRWLLGASRKRPGRNMAFKLSSELVDAAKGSGDAIRKKEETHRMAEANRAFAHFR</sequence>
<reference key="1">
    <citation type="journal article" date="2007" name="Mol. Phylogenet. Evol.">
        <title>Phylogenetic and evolutionary implications of complete chloroplast genome sequences of four early-diverging angiosperms: Buxus (Buxaceae), Chloranthus (Chloranthaceae), Dioscorea (Dioscoreaceae), and Illicium (Schisandraceae).</title>
        <authorList>
            <person name="Hansen D.R."/>
            <person name="Dastidar S.G."/>
            <person name="Cai Z."/>
            <person name="Penaflor C."/>
            <person name="Kuehl J.V."/>
            <person name="Boore J.L."/>
            <person name="Jansen R.K."/>
        </authorList>
    </citation>
    <scope>NUCLEOTIDE SEQUENCE [LARGE SCALE GENOMIC DNA]</scope>
</reference>
<name>RR7_ILLOL</name>
<feature type="chain" id="PRO_0000344342" description="Small ribosomal subunit protein uS7cz/uS7cy">
    <location>
        <begin position="1"/>
        <end position="155"/>
    </location>
</feature>
<accession>A6MMZ0</accession>
<proteinExistence type="inferred from homology"/>
<organism>
    <name type="scientific">Illicium oligandrum</name>
    <name type="common">Star anise</name>
    <dbReference type="NCBI Taxonomy" id="145286"/>
    <lineage>
        <taxon>Eukaryota</taxon>
        <taxon>Viridiplantae</taxon>
        <taxon>Streptophyta</taxon>
        <taxon>Embryophyta</taxon>
        <taxon>Tracheophyta</taxon>
        <taxon>Spermatophyta</taxon>
        <taxon>Magnoliopsida</taxon>
        <taxon>Austrobaileyales</taxon>
        <taxon>Schisandraceae</taxon>
        <taxon>Illicium</taxon>
    </lineage>
</organism>
<comment type="function">
    <text evidence="1">One of the primary rRNA binding proteins, it binds directly to 16S rRNA where it nucleates assembly of the head domain of the 30S subunit.</text>
</comment>
<comment type="subunit">
    <text evidence="1">Part of the 30S ribosomal subunit.</text>
</comment>
<comment type="subcellular location">
    <subcellularLocation>
        <location>Plastid</location>
        <location>Chloroplast</location>
    </subcellularLocation>
</comment>
<comment type="similarity">
    <text evidence="3">Belongs to the universal ribosomal protein uS7 family.</text>
</comment>
<protein>
    <recommendedName>
        <fullName evidence="2">Small ribosomal subunit protein uS7cz/uS7cy</fullName>
    </recommendedName>
    <alternativeName>
        <fullName>30S ribosomal protein S7, chloroplastic</fullName>
    </alternativeName>
</protein>
<dbReference type="EMBL" id="EF380354">
    <property type="protein sequence ID" value="ABQ52564.1"/>
    <property type="molecule type" value="Genomic_DNA"/>
</dbReference>
<dbReference type="EMBL" id="EF380354">
    <property type="protein sequence ID" value="ABQ52580.1"/>
    <property type="molecule type" value="Genomic_DNA"/>
</dbReference>
<dbReference type="SMR" id="A6MMZ0"/>
<dbReference type="GO" id="GO:0009507">
    <property type="term" value="C:chloroplast"/>
    <property type="evidence" value="ECO:0007669"/>
    <property type="project" value="UniProtKB-SubCell"/>
</dbReference>
<dbReference type="GO" id="GO:0015935">
    <property type="term" value="C:small ribosomal subunit"/>
    <property type="evidence" value="ECO:0007669"/>
    <property type="project" value="InterPro"/>
</dbReference>
<dbReference type="GO" id="GO:0019843">
    <property type="term" value="F:rRNA binding"/>
    <property type="evidence" value="ECO:0007669"/>
    <property type="project" value="UniProtKB-UniRule"/>
</dbReference>
<dbReference type="GO" id="GO:0003735">
    <property type="term" value="F:structural constituent of ribosome"/>
    <property type="evidence" value="ECO:0007669"/>
    <property type="project" value="InterPro"/>
</dbReference>
<dbReference type="GO" id="GO:0006412">
    <property type="term" value="P:translation"/>
    <property type="evidence" value="ECO:0007669"/>
    <property type="project" value="UniProtKB-UniRule"/>
</dbReference>
<dbReference type="CDD" id="cd14871">
    <property type="entry name" value="uS7_Chloroplast"/>
    <property type="match status" value="1"/>
</dbReference>
<dbReference type="FunFam" id="1.10.455.10:FF:000001">
    <property type="entry name" value="30S ribosomal protein S7"/>
    <property type="match status" value="1"/>
</dbReference>
<dbReference type="Gene3D" id="1.10.455.10">
    <property type="entry name" value="Ribosomal protein S7 domain"/>
    <property type="match status" value="1"/>
</dbReference>
<dbReference type="HAMAP" id="MF_00480_B">
    <property type="entry name" value="Ribosomal_uS7_B"/>
    <property type="match status" value="1"/>
</dbReference>
<dbReference type="InterPro" id="IPR000235">
    <property type="entry name" value="Ribosomal_uS7"/>
</dbReference>
<dbReference type="InterPro" id="IPR005717">
    <property type="entry name" value="Ribosomal_uS7_bac/org-type"/>
</dbReference>
<dbReference type="InterPro" id="IPR020606">
    <property type="entry name" value="Ribosomal_uS7_CS"/>
</dbReference>
<dbReference type="InterPro" id="IPR023798">
    <property type="entry name" value="Ribosomal_uS7_dom"/>
</dbReference>
<dbReference type="InterPro" id="IPR036823">
    <property type="entry name" value="Ribosomal_uS7_dom_sf"/>
</dbReference>
<dbReference type="NCBIfam" id="TIGR01029">
    <property type="entry name" value="rpsG_bact"/>
    <property type="match status" value="1"/>
</dbReference>
<dbReference type="PANTHER" id="PTHR11205">
    <property type="entry name" value="RIBOSOMAL PROTEIN S7"/>
    <property type="match status" value="1"/>
</dbReference>
<dbReference type="Pfam" id="PF00177">
    <property type="entry name" value="Ribosomal_S7"/>
    <property type="match status" value="1"/>
</dbReference>
<dbReference type="PIRSF" id="PIRSF002122">
    <property type="entry name" value="RPS7p_RPS7a_RPS5e_RPS7o"/>
    <property type="match status" value="1"/>
</dbReference>
<dbReference type="SUPFAM" id="SSF47973">
    <property type="entry name" value="Ribosomal protein S7"/>
    <property type="match status" value="1"/>
</dbReference>
<dbReference type="PROSITE" id="PS00052">
    <property type="entry name" value="RIBOSOMAL_S7"/>
    <property type="match status" value="1"/>
</dbReference>
<evidence type="ECO:0000250" key="1"/>
<evidence type="ECO:0000255" key="2">
    <source>
        <dbReference type="HAMAP-Rule" id="MF_00480"/>
    </source>
</evidence>
<evidence type="ECO:0000305" key="3"/>
<keyword id="KW-0150">Chloroplast</keyword>
<keyword id="KW-0934">Plastid</keyword>
<keyword id="KW-0687">Ribonucleoprotein</keyword>
<keyword id="KW-0689">Ribosomal protein</keyword>
<keyword id="KW-0694">RNA-binding</keyword>
<keyword id="KW-0699">rRNA-binding</keyword>
<gene>
    <name type="primary">rps7-A</name>
</gene>
<gene>
    <name type="primary">rps7-B</name>
</gene>
<geneLocation type="chloroplast"/>